<sequence>MVNHIRIFDNLFQSNISKFQNLTSKSYIIRNDNEKNSYLPMVQEIRELFGKEGEIFSKSIGTHPDFFGIENTNEYQYICSLFVDISGSTKLALKYSLDKVKLYKNAIISSAIEIFRAFDGHIHRIQGDAVLVYFGHKELEKSDAIINAINAASLMQYFNATTLKKFFESENLEPLKIRIGIDFGDDSSVLWSKYGIDGINEITSTSIHTDLASKFQNKAPSNKIMIGENINKYLDIPKKFRSIKIEKNNGVDVEKRYILNTNNLGRYSMEVFEWEKYLNSFSMLPPFSTENEQFYSPRDLKIRCWIIDEKNQDKYEYIERGSALKKEMNLLFKLEIYNQCLEFKNIKWRVVNYGEEAKKDKELEFEMNQYEGYQYCNQKTAYTGLHFMECYLYDINDKIICHDSFGLFINDNNREVRKLGIED</sequence>
<gene>
    <name evidence="6" type="primary">pycC</name>
    <name evidence="7" type="ORF">ERS179182_02234</name>
</gene>
<feature type="chain" id="PRO_0000455220" description="Cytidylate cyclase">
    <location>
        <begin position="1"/>
        <end position="423"/>
    </location>
</feature>
<feature type="domain" description="Guanylate cyclase" evidence="4">
    <location>
        <begin position="79"/>
        <end position="184"/>
    </location>
</feature>
<feature type="region of interest" description="AGS-C domain" evidence="9">
    <location>
        <begin position="290"/>
        <end position="409"/>
    </location>
</feature>
<feature type="binding site" evidence="3 9">
    <location>
        <position position="82"/>
    </location>
    <ligand>
        <name>a ribonucleoside 5'-triphosphate</name>
        <dbReference type="ChEBI" id="CHEBI:61557"/>
    </ligand>
</feature>
<feature type="binding site" evidence="9">
    <location>
        <position position="84"/>
    </location>
    <ligand>
        <name>Mn(2+)</name>
        <dbReference type="ChEBI" id="CHEBI:29035"/>
        <label>1</label>
    </ligand>
</feature>
<feature type="binding site" evidence="9">
    <location>
        <position position="84"/>
    </location>
    <ligand>
        <name>Mn(2+)</name>
        <dbReference type="ChEBI" id="CHEBI:29035"/>
        <label>2</label>
    </ligand>
</feature>
<feature type="binding site" evidence="9">
    <location>
        <position position="85"/>
    </location>
    <ligand>
        <name>Mn(2+)</name>
        <dbReference type="ChEBI" id="CHEBI:29035"/>
        <label>2</label>
    </ligand>
</feature>
<feature type="binding site" evidence="9">
    <location>
        <position position="128"/>
    </location>
    <ligand>
        <name>Mn(2+)</name>
        <dbReference type="ChEBI" id="CHEBI:29035"/>
        <label>1</label>
    </ligand>
</feature>
<feature type="binding site" evidence="9">
    <location>
        <position position="128"/>
    </location>
    <ligand>
        <name>Mn(2+)</name>
        <dbReference type="ChEBI" id="CHEBI:29035"/>
        <label>2</label>
    </ligand>
</feature>
<dbReference type="EC" id="4.6.1.6" evidence="5"/>
<dbReference type="EMBL" id="CSOZ01000027">
    <property type="protein sequence ID" value="CPM02544.1"/>
    <property type="molecule type" value="Genomic_DNA"/>
</dbReference>
<dbReference type="RefSeq" id="WP_050974423.1">
    <property type="nucleotide sequence ID" value="NZ_CSOZ01000027.1"/>
</dbReference>
<dbReference type="SMR" id="P0DV38"/>
<dbReference type="GO" id="GO:0005737">
    <property type="term" value="C:cytoplasm"/>
    <property type="evidence" value="ECO:0007669"/>
    <property type="project" value="UniProtKB-SubCell"/>
</dbReference>
<dbReference type="GO" id="GO:0004016">
    <property type="term" value="F:adenylate cyclase activity"/>
    <property type="evidence" value="ECO:0007669"/>
    <property type="project" value="UniProtKB-ARBA"/>
</dbReference>
<dbReference type="GO" id="GO:0046872">
    <property type="term" value="F:metal ion binding"/>
    <property type="evidence" value="ECO:0007669"/>
    <property type="project" value="UniProtKB-KW"/>
</dbReference>
<dbReference type="GO" id="GO:0000166">
    <property type="term" value="F:nucleotide binding"/>
    <property type="evidence" value="ECO:0007669"/>
    <property type="project" value="UniProtKB-KW"/>
</dbReference>
<dbReference type="GO" id="GO:0009190">
    <property type="term" value="P:cyclic nucleotide biosynthetic process"/>
    <property type="evidence" value="ECO:0007669"/>
    <property type="project" value="InterPro"/>
</dbReference>
<dbReference type="GO" id="GO:0051607">
    <property type="term" value="P:defense response to virus"/>
    <property type="evidence" value="ECO:0007669"/>
    <property type="project" value="UniProtKB-KW"/>
</dbReference>
<dbReference type="GO" id="GO:0035556">
    <property type="term" value="P:intracellular signal transduction"/>
    <property type="evidence" value="ECO:0007669"/>
    <property type="project" value="InterPro"/>
</dbReference>
<dbReference type="CDD" id="cd07302">
    <property type="entry name" value="CHD"/>
    <property type="match status" value="1"/>
</dbReference>
<dbReference type="Gene3D" id="3.30.70.1230">
    <property type="entry name" value="Nucleotide cyclase"/>
    <property type="match status" value="1"/>
</dbReference>
<dbReference type="InterPro" id="IPR001054">
    <property type="entry name" value="A/G_cyclase"/>
</dbReference>
<dbReference type="InterPro" id="IPR040511">
    <property type="entry name" value="AGS_C"/>
</dbReference>
<dbReference type="InterPro" id="IPR029787">
    <property type="entry name" value="Nucleotide_cyclase"/>
</dbReference>
<dbReference type="Pfam" id="PF18134">
    <property type="entry name" value="AGS_C"/>
    <property type="match status" value="1"/>
</dbReference>
<dbReference type="Pfam" id="PF00211">
    <property type="entry name" value="Guanylate_cyc"/>
    <property type="match status" value="1"/>
</dbReference>
<dbReference type="SUPFAM" id="SSF55073">
    <property type="entry name" value="Nucleotide cyclase"/>
    <property type="match status" value="1"/>
</dbReference>
<dbReference type="PROSITE" id="PS50125">
    <property type="entry name" value="GUANYLATE_CYCLASE_2"/>
    <property type="match status" value="1"/>
</dbReference>
<comment type="function">
    <text evidence="9">Pycsar (pyrimidine cyclase system for antiphage resistance) provides immunity against bacteriophage. The pyrimidine cyclase (PycC) synthesizes cyclic nucleotides in response to infection; these serve as specific second messenger signals. The signal activates the adjacent effector, leading to bacterial cell death and abortive phage infection. A clade E Pycsar system.</text>
</comment>
<comment type="function">
    <text evidence="5 9">The pyrimidine cyclase gene of a two-gene Pycsar system, weakly generates cyclic CMP (cCMP) from CTP, has little to no activity on ATP, GTP or UTP (PubMed:34644530). Expression of this and adjacent effector SaPycTM (AC P0DV39) probably confers resistance to bacteriophage. The genes are probably only expressed in response to bacteriophage infection (Probable).</text>
</comment>
<comment type="catalytic activity">
    <reaction evidence="5">
        <text>CTP = 3',5'-cyclic CMP + diphosphate</text>
        <dbReference type="Rhea" id="RHEA:14737"/>
        <dbReference type="ChEBI" id="CHEBI:33019"/>
        <dbReference type="ChEBI" id="CHEBI:37563"/>
        <dbReference type="ChEBI" id="CHEBI:58003"/>
        <dbReference type="EC" id="4.6.1.6"/>
    </reaction>
</comment>
<comment type="cofactor">
    <cofactor evidence="2">
        <name>Mn(2+)</name>
        <dbReference type="ChEBI" id="CHEBI:29035"/>
    </cofactor>
</comment>
<comment type="subunit">
    <text evidence="1">Homodimer.</text>
</comment>
<comment type="subcellular location">
    <subcellularLocation>
        <location evidence="8">Cytoplasm</location>
    </subcellularLocation>
</comment>
<comment type="domain">
    <text evidence="9">Has an N-terminal nucleotide cyclase domain and a C-terminal nucleotide sensor domain (AGS-C).</text>
</comment>
<comment type="similarity">
    <text evidence="9">Belongs to the adenylyl cyclase class-4/guanylyl cyclase family. Pyrimidine cyclase subfamily.</text>
</comment>
<name>PYCC_STAAU</name>
<proteinExistence type="evidence at protein level"/>
<protein>
    <recommendedName>
        <fullName evidence="6">Cytidylate cyclase</fullName>
        <ecNumber evidence="5">4.6.1.6</ecNumber>
    </recommendedName>
    <alternativeName>
        <fullName>Cyclic CMP synthase</fullName>
        <shortName evidence="6">cCMP synthase</shortName>
    </alternativeName>
    <alternativeName>
        <fullName evidence="6">SaPycC</fullName>
    </alternativeName>
</protein>
<organism>
    <name type="scientific">Staphylococcus aureus</name>
    <dbReference type="NCBI Taxonomy" id="1280"/>
    <lineage>
        <taxon>Bacteria</taxon>
        <taxon>Bacillati</taxon>
        <taxon>Bacillota</taxon>
        <taxon>Bacilli</taxon>
        <taxon>Bacillales</taxon>
        <taxon>Staphylococcaceae</taxon>
        <taxon>Staphylococcus</taxon>
    </lineage>
</organism>
<reference key="1">
    <citation type="submission" date="2015-03" db="EMBL/GenBank/DDBJ databases">
        <authorList>
            <consortium name="Pathogen Informatics"/>
        </authorList>
    </citation>
    <scope>NUCLEOTIDE SEQUENCE [LARGE SCALE GENOMIC DNA]</scope>
    <source>
        <strain>BSAR724</strain>
    </source>
</reference>
<reference key="2">
    <citation type="journal article" date="2021" name="Cell">
        <title>Cyclic CMP and cyclic UMP mediate bacterial immunity against phages.</title>
        <authorList>
            <person name="Tal N."/>
            <person name="Morehouse B.R."/>
            <person name="Millman A."/>
            <person name="Stokar-Avihail A."/>
            <person name="Avraham C."/>
            <person name="Fedorenko T."/>
            <person name="Yirmiya E."/>
            <person name="Herbst E."/>
            <person name="Brandis A."/>
            <person name="Mehlman T."/>
            <person name="Oppenheimer-Shaanan Y."/>
            <person name="Keszei A.F.A."/>
            <person name="Shao S."/>
            <person name="Amitai G."/>
            <person name="Kranzusch P.J."/>
            <person name="Sorek R."/>
        </authorList>
    </citation>
    <scope>FUNCTION</scope>
    <scope>CATALYTIC ACTIVITY</scope>
    <scope>CLASSIFICATION</scope>
    <source>
        <strain>BSAR724</strain>
    </source>
</reference>
<evidence type="ECO:0000250" key="1">
    <source>
        <dbReference type="UniProtKB" id="A0A0J5ZXG5"/>
    </source>
</evidence>
<evidence type="ECO:0000250" key="2">
    <source>
        <dbReference type="UniProtKB" id="P0DV24"/>
    </source>
</evidence>
<evidence type="ECO:0000250" key="3">
    <source>
        <dbReference type="UniProtKB" id="P0DV40"/>
    </source>
</evidence>
<evidence type="ECO:0000255" key="4">
    <source>
        <dbReference type="PROSITE-ProRule" id="PRU00099"/>
    </source>
</evidence>
<evidence type="ECO:0000269" key="5">
    <source>
    </source>
</evidence>
<evidence type="ECO:0000303" key="6">
    <source>
    </source>
</evidence>
<evidence type="ECO:0000303" key="7">
    <source ref="1"/>
</evidence>
<evidence type="ECO:0000305" key="8"/>
<evidence type="ECO:0000305" key="9">
    <source>
    </source>
</evidence>
<keyword id="KW-0051">Antiviral defense</keyword>
<keyword id="KW-0963">Cytoplasm</keyword>
<keyword id="KW-0456">Lyase</keyword>
<keyword id="KW-0464">Manganese</keyword>
<keyword id="KW-0479">Metal-binding</keyword>
<keyword id="KW-0547">Nucleotide-binding</keyword>
<accession>P0DV38</accession>